<feature type="chain" id="PRO_1000133265" description="Isocitrate dehydrogenase kinase/phosphatase">
    <location>
        <begin position="1"/>
        <end position="578"/>
    </location>
</feature>
<feature type="active site" evidence="1">
    <location>
        <position position="371"/>
    </location>
</feature>
<feature type="binding site" evidence="1">
    <location>
        <begin position="315"/>
        <end position="321"/>
    </location>
    <ligand>
        <name>ATP</name>
        <dbReference type="ChEBI" id="CHEBI:30616"/>
    </ligand>
</feature>
<feature type="binding site" evidence="1">
    <location>
        <position position="336"/>
    </location>
    <ligand>
        <name>ATP</name>
        <dbReference type="ChEBI" id="CHEBI:30616"/>
    </ligand>
</feature>
<sequence length="578" mass="67735">MPRGLELLIAQTILQGFDAQYGRFLEVTSGAQQRFEQADWHAVQQAMKNRIHLYDHHVGLVVEQLRCITNGQSTDAEFLLRVKEHYTRLLPDYPRFEIAESFFNSVYCRLFDHRSLTPERLFIFSSQPERRFRTIPRPLAKDFHPDHGWESLLMRVISDLPLRLHWQNKSRDIHYIIRHLTETLGPENLSKSHLQVANELFYRNKAAWLVGKLITPSGTLPFLLPIHQTDDGELFIDTCLTTTAEASIVFGFARSYFMVYAPLPAALVEWLREILPGKTTAELYMAIGCQKHAKTESYREYLVYLQGCNEQFIEAPGIRGMVMLVFTLPGFDRVFKVIKDKFAPQKEMSAAHVRACYQLVKEHDRVGRMADTQEFENFVLEKRHISPALMELLLQEAAEKITDLGEQIVIRHLYIERRMVPLNIWLEQVEGQQLRDAIEEYGNAIRQLAAANIFPGDMLFKNFGVTRHGRVVFYDYDEICYMTEVNFRDIPPPRYPEDELASEPWYSVSPGDVFPEEFRHWLCADPRIGPLFEEMHADLFRADYWRALQNRIREGHVEDVYAYRRRQRFSVRYGEMLF</sequence>
<gene>
    <name evidence="1" type="primary">aceK</name>
    <name type="ordered locus">ECH74115_5487</name>
</gene>
<keyword id="KW-0067">ATP-binding</keyword>
<keyword id="KW-0963">Cytoplasm</keyword>
<keyword id="KW-0329">Glyoxylate bypass</keyword>
<keyword id="KW-0378">Hydrolase</keyword>
<keyword id="KW-0418">Kinase</keyword>
<keyword id="KW-0547">Nucleotide-binding</keyword>
<keyword id="KW-0904">Protein phosphatase</keyword>
<keyword id="KW-0723">Serine/threonine-protein kinase</keyword>
<keyword id="KW-0808">Transferase</keyword>
<keyword id="KW-0816">Tricarboxylic acid cycle</keyword>
<accession>B5Z0A8</accession>
<evidence type="ECO:0000255" key="1">
    <source>
        <dbReference type="HAMAP-Rule" id="MF_00747"/>
    </source>
</evidence>
<name>ACEK_ECO5E</name>
<proteinExistence type="inferred from homology"/>
<protein>
    <recommendedName>
        <fullName evidence="1">Isocitrate dehydrogenase kinase/phosphatase</fullName>
        <shortName evidence="1">IDH kinase/phosphatase</shortName>
        <shortName evidence="1">IDHK/P</shortName>
        <ecNumber evidence="1">2.7.11.5</ecNumber>
        <ecNumber evidence="1">3.1.3.-</ecNumber>
    </recommendedName>
</protein>
<comment type="function">
    <text evidence="1">Bifunctional enzyme which can phosphorylate or dephosphorylate isocitrate dehydrogenase (IDH) on a specific serine residue. This is a regulatory mechanism which enables bacteria to bypass the Krebs cycle via the glyoxylate shunt in response to the source of carbon. When bacteria are grown on glucose, IDH is fully active and unphosphorylated, but when grown on acetate or ethanol, the activity of IDH declines drastically concomitant with its phosphorylation.</text>
</comment>
<comment type="catalytic activity">
    <reaction evidence="1">
        <text>L-seryl-[isocitrate dehydrogenase] + ATP = O-phospho-L-seryl-[isocitrate dehydrogenase] + ADP + H(+)</text>
        <dbReference type="Rhea" id="RHEA:43540"/>
        <dbReference type="Rhea" id="RHEA-COMP:10605"/>
        <dbReference type="Rhea" id="RHEA-COMP:10606"/>
        <dbReference type="ChEBI" id="CHEBI:15378"/>
        <dbReference type="ChEBI" id="CHEBI:29999"/>
        <dbReference type="ChEBI" id="CHEBI:30616"/>
        <dbReference type="ChEBI" id="CHEBI:83421"/>
        <dbReference type="ChEBI" id="CHEBI:456216"/>
        <dbReference type="EC" id="2.7.11.5"/>
    </reaction>
</comment>
<comment type="subcellular location">
    <subcellularLocation>
        <location evidence="1">Cytoplasm</location>
    </subcellularLocation>
</comment>
<comment type="similarity">
    <text evidence="1">Belongs to the AceK family.</text>
</comment>
<dbReference type="EC" id="2.7.11.5" evidence="1"/>
<dbReference type="EC" id="3.1.3.-" evidence="1"/>
<dbReference type="EMBL" id="CP001164">
    <property type="protein sequence ID" value="ACI36337.1"/>
    <property type="molecule type" value="Genomic_DNA"/>
</dbReference>
<dbReference type="RefSeq" id="WP_001137245.1">
    <property type="nucleotide sequence ID" value="NC_011353.1"/>
</dbReference>
<dbReference type="SMR" id="B5Z0A8"/>
<dbReference type="KEGG" id="ecf:ECH74115_5487"/>
<dbReference type="HOGENOM" id="CLU_033804_1_1_6"/>
<dbReference type="GO" id="GO:0005737">
    <property type="term" value="C:cytoplasm"/>
    <property type="evidence" value="ECO:0007669"/>
    <property type="project" value="UniProtKB-SubCell"/>
</dbReference>
<dbReference type="GO" id="GO:0008772">
    <property type="term" value="F:[isocitrate dehydrogenase (NADP+)] kinase activity"/>
    <property type="evidence" value="ECO:0007669"/>
    <property type="project" value="UniProtKB-UniRule"/>
</dbReference>
<dbReference type="GO" id="GO:0016208">
    <property type="term" value="F:AMP binding"/>
    <property type="evidence" value="ECO:0007669"/>
    <property type="project" value="TreeGrafter"/>
</dbReference>
<dbReference type="GO" id="GO:0005524">
    <property type="term" value="F:ATP binding"/>
    <property type="evidence" value="ECO:0007669"/>
    <property type="project" value="UniProtKB-UniRule"/>
</dbReference>
<dbReference type="GO" id="GO:0004721">
    <property type="term" value="F:phosphoprotein phosphatase activity"/>
    <property type="evidence" value="ECO:0007669"/>
    <property type="project" value="UniProtKB-KW"/>
</dbReference>
<dbReference type="GO" id="GO:0004674">
    <property type="term" value="F:protein serine/threonine kinase activity"/>
    <property type="evidence" value="ECO:0007669"/>
    <property type="project" value="UniProtKB-KW"/>
</dbReference>
<dbReference type="GO" id="GO:0006006">
    <property type="term" value="P:glucose metabolic process"/>
    <property type="evidence" value="ECO:0007669"/>
    <property type="project" value="InterPro"/>
</dbReference>
<dbReference type="GO" id="GO:0006097">
    <property type="term" value="P:glyoxylate cycle"/>
    <property type="evidence" value="ECO:0007669"/>
    <property type="project" value="UniProtKB-UniRule"/>
</dbReference>
<dbReference type="GO" id="GO:0006099">
    <property type="term" value="P:tricarboxylic acid cycle"/>
    <property type="evidence" value="ECO:0007669"/>
    <property type="project" value="UniProtKB-UniRule"/>
</dbReference>
<dbReference type="HAMAP" id="MF_00747">
    <property type="entry name" value="AceK"/>
    <property type="match status" value="1"/>
</dbReference>
<dbReference type="InterPro" id="IPR046855">
    <property type="entry name" value="AceK_kinase"/>
</dbReference>
<dbReference type="InterPro" id="IPR046854">
    <property type="entry name" value="AceK_regulatory"/>
</dbReference>
<dbReference type="InterPro" id="IPR010452">
    <property type="entry name" value="Isocitrate_DH_AceK"/>
</dbReference>
<dbReference type="NCBIfam" id="NF002804">
    <property type="entry name" value="PRK02946.1"/>
    <property type="match status" value="1"/>
</dbReference>
<dbReference type="PANTHER" id="PTHR39559">
    <property type="match status" value="1"/>
</dbReference>
<dbReference type="PANTHER" id="PTHR39559:SF1">
    <property type="entry name" value="ISOCITRATE DEHYDROGENASE KINASE_PHOSPHATASE"/>
    <property type="match status" value="1"/>
</dbReference>
<dbReference type="Pfam" id="PF06315">
    <property type="entry name" value="AceK_kinase"/>
    <property type="match status" value="1"/>
</dbReference>
<dbReference type="Pfam" id="PF20423">
    <property type="entry name" value="AceK_regulatory"/>
    <property type="match status" value="1"/>
</dbReference>
<dbReference type="PIRSF" id="PIRSF000719">
    <property type="entry name" value="AceK"/>
    <property type="match status" value="1"/>
</dbReference>
<reference key="1">
    <citation type="journal article" date="2011" name="Proc. Natl. Acad. Sci. U.S.A.">
        <title>Genomic anatomy of Escherichia coli O157:H7 outbreaks.</title>
        <authorList>
            <person name="Eppinger M."/>
            <person name="Mammel M.K."/>
            <person name="Leclerc J.E."/>
            <person name="Ravel J."/>
            <person name="Cebula T.A."/>
        </authorList>
    </citation>
    <scope>NUCLEOTIDE SEQUENCE [LARGE SCALE GENOMIC DNA]</scope>
    <source>
        <strain>EC4115 / EHEC</strain>
    </source>
</reference>
<organism>
    <name type="scientific">Escherichia coli O157:H7 (strain EC4115 / EHEC)</name>
    <dbReference type="NCBI Taxonomy" id="444450"/>
    <lineage>
        <taxon>Bacteria</taxon>
        <taxon>Pseudomonadati</taxon>
        <taxon>Pseudomonadota</taxon>
        <taxon>Gammaproteobacteria</taxon>
        <taxon>Enterobacterales</taxon>
        <taxon>Enterobacteriaceae</taxon>
        <taxon>Escherichia</taxon>
    </lineage>
</organism>